<accession>O74095</accession>
<reference key="1">
    <citation type="journal article" date="1998" name="DNA Res.">
        <title>Complete sequence and gene organization of the genome of a hyper-thermophilic archaebacterium, Pyrococcus horikoshii OT3.</title>
        <authorList>
            <person name="Kawarabayasi Y."/>
            <person name="Sawada M."/>
            <person name="Horikawa H."/>
            <person name="Haikawa Y."/>
            <person name="Hino Y."/>
            <person name="Yamamoto S."/>
            <person name="Sekine M."/>
            <person name="Baba S."/>
            <person name="Kosugi H."/>
            <person name="Hosoyama A."/>
            <person name="Nagai Y."/>
            <person name="Sakai M."/>
            <person name="Ogura K."/>
            <person name="Otsuka R."/>
            <person name="Nakazawa H."/>
            <person name="Takamiya M."/>
            <person name="Ohfuku Y."/>
            <person name="Funahashi T."/>
            <person name="Tanaka T."/>
            <person name="Kudoh Y."/>
            <person name="Yamazaki J."/>
            <person name="Kushida N."/>
            <person name="Oguchi A."/>
            <person name="Aoki K."/>
            <person name="Yoshizawa T."/>
            <person name="Nakamura Y."/>
            <person name="Robb F.T."/>
            <person name="Horikoshi K."/>
            <person name="Masuchi Y."/>
            <person name="Shizuya H."/>
            <person name="Kikuchi H."/>
        </authorList>
    </citation>
    <scope>NUCLEOTIDE SEQUENCE [LARGE SCALE GENOMIC DNA]</scope>
    <source>
        <strain>ATCC 700860 / DSM 12428 / JCM 9974 / NBRC 100139 / OT-3</strain>
    </source>
</reference>
<sequence>MDPYKVIIRPVVTEKAISLIEKENKLTFIVDRRATKTDIKKAIEEIFNVKVEKVNTLITPKGEKKAYVKLKPEYSASEIAARLGLF</sequence>
<keyword id="KW-0687">Ribonucleoprotein</keyword>
<keyword id="KW-0689">Ribosomal protein</keyword>
<keyword id="KW-0694">RNA-binding</keyword>
<keyword id="KW-0699">rRNA-binding</keyword>
<name>RL23_PYRHO</name>
<dbReference type="EMBL" id="BA000001">
    <property type="protein sequence ID" value="BAA30892.1"/>
    <property type="molecule type" value="Genomic_DNA"/>
</dbReference>
<dbReference type="PIR" id="E71187">
    <property type="entry name" value="E71187"/>
</dbReference>
<dbReference type="RefSeq" id="WP_010885839.1">
    <property type="nucleotide sequence ID" value="NC_000961.1"/>
</dbReference>
<dbReference type="SMR" id="O74095"/>
<dbReference type="STRING" id="70601.gene:9378775"/>
<dbReference type="EnsemblBacteria" id="BAA30892">
    <property type="protein sequence ID" value="BAA30892"/>
    <property type="gene ID" value="BAA30892"/>
</dbReference>
<dbReference type="GeneID" id="1442621"/>
<dbReference type="KEGG" id="pho:PHS049"/>
<dbReference type="eggNOG" id="arCOG04072">
    <property type="taxonomic scope" value="Archaea"/>
</dbReference>
<dbReference type="OrthoDB" id="7751at2157"/>
<dbReference type="Proteomes" id="UP000000752">
    <property type="component" value="Chromosome"/>
</dbReference>
<dbReference type="GO" id="GO:1990904">
    <property type="term" value="C:ribonucleoprotein complex"/>
    <property type="evidence" value="ECO:0007669"/>
    <property type="project" value="UniProtKB-KW"/>
</dbReference>
<dbReference type="GO" id="GO:0005840">
    <property type="term" value="C:ribosome"/>
    <property type="evidence" value="ECO:0007669"/>
    <property type="project" value="UniProtKB-KW"/>
</dbReference>
<dbReference type="GO" id="GO:0019843">
    <property type="term" value="F:rRNA binding"/>
    <property type="evidence" value="ECO:0007669"/>
    <property type="project" value="UniProtKB-UniRule"/>
</dbReference>
<dbReference type="GO" id="GO:0003735">
    <property type="term" value="F:structural constituent of ribosome"/>
    <property type="evidence" value="ECO:0007669"/>
    <property type="project" value="InterPro"/>
</dbReference>
<dbReference type="GO" id="GO:0006412">
    <property type="term" value="P:translation"/>
    <property type="evidence" value="ECO:0007669"/>
    <property type="project" value="UniProtKB-UniRule"/>
</dbReference>
<dbReference type="FunFam" id="3.30.70.330:FF:001084">
    <property type="entry name" value="50S ribosomal protein L23"/>
    <property type="match status" value="1"/>
</dbReference>
<dbReference type="Gene3D" id="3.30.70.330">
    <property type="match status" value="1"/>
</dbReference>
<dbReference type="HAMAP" id="MF_01369_A">
    <property type="entry name" value="Ribosomal_uL23_A"/>
    <property type="match status" value="1"/>
</dbReference>
<dbReference type="HAMAP" id="MF_01369_B">
    <property type="entry name" value="Ribosomal_uL23_B"/>
    <property type="match status" value="1"/>
</dbReference>
<dbReference type="InterPro" id="IPR012677">
    <property type="entry name" value="Nucleotide-bd_a/b_plait_sf"/>
</dbReference>
<dbReference type="InterPro" id="IPR019985">
    <property type="entry name" value="Ribosomal_uL23"/>
</dbReference>
<dbReference type="InterPro" id="IPR013025">
    <property type="entry name" value="Ribosomal_uL23-like"/>
</dbReference>
<dbReference type="InterPro" id="IPR012678">
    <property type="entry name" value="Ribosomal_uL23/eL15/eS24_sf"/>
</dbReference>
<dbReference type="InterPro" id="IPR001014">
    <property type="entry name" value="Ribosomal_uL23_CS"/>
</dbReference>
<dbReference type="NCBIfam" id="NF011118">
    <property type="entry name" value="PRK14548.1"/>
    <property type="match status" value="1"/>
</dbReference>
<dbReference type="NCBIfam" id="TIGR03636">
    <property type="entry name" value="uL23_arch"/>
    <property type="match status" value="1"/>
</dbReference>
<dbReference type="PANTHER" id="PTHR11620">
    <property type="entry name" value="60S RIBOSOMAL PROTEIN L23A"/>
    <property type="match status" value="1"/>
</dbReference>
<dbReference type="Pfam" id="PF00276">
    <property type="entry name" value="Ribosomal_L23"/>
    <property type="match status" value="1"/>
</dbReference>
<dbReference type="SUPFAM" id="SSF54189">
    <property type="entry name" value="Ribosomal proteins S24e, L23 and L15e"/>
    <property type="match status" value="1"/>
</dbReference>
<dbReference type="PROSITE" id="PS00050">
    <property type="entry name" value="RIBOSOMAL_L23"/>
    <property type="match status" value="1"/>
</dbReference>
<organism>
    <name type="scientific">Pyrococcus horikoshii (strain ATCC 700860 / DSM 12428 / JCM 9974 / NBRC 100139 / OT-3)</name>
    <dbReference type="NCBI Taxonomy" id="70601"/>
    <lineage>
        <taxon>Archaea</taxon>
        <taxon>Methanobacteriati</taxon>
        <taxon>Methanobacteriota</taxon>
        <taxon>Thermococci</taxon>
        <taxon>Thermococcales</taxon>
        <taxon>Thermococcaceae</taxon>
        <taxon>Pyrococcus</taxon>
    </lineage>
</organism>
<feature type="chain" id="PRO_0000129441" description="Large ribosomal subunit protein uL23">
    <location>
        <begin position="1"/>
        <end position="86"/>
    </location>
</feature>
<comment type="function">
    <text evidence="1">Binds to 23S rRNA. One of the proteins that surrounds the polypeptide exit tunnel on the outside of the ribosome.</text>
</comment>
<comment type="subunit">
    <text evidence="1">Part of the 50S ribosomal subunit. Contacts protein L29.</text>
</comment>
<comment type="similarity">
    <text evidence="1">Belongs to the universal ribosomal protein uL23 family.</text>
</comment>
<proteinExistence type="inferred from homology"/>
<evidence type="ECO:0000255" key="1">
    <source>
        <dbReference type="HAMAP-Rule" id="MF_01369"/>
    </source>
</evidence>
<evidence type="ECO:0000305" key="2"/>
<protein>
    <recommendedName>
        <fullName evidence="1">Large ribosomal subunit protein uL23</fullName>
    </recommendedName>
    <alternativeName>
        <fullName evidence="2">50S ribosomal protein L23</fullName>
    </alternativeName>
</protein>
<gene>
    <name evidence="1" type="primary">rpl23</name>
    <name type="ordered locus">PH1775.1</name>
    <name type="ORF">PHS049</name>
</gene>